<organism>
    <name type="scientific">Escherichia coli O7:K1 (strain IAI39 / ExPEC)</name>
    <dbReference type="NCBI Taxonomy" id="585057"/>
    <lineage>
        <taxon>Bacteria</taxon>
        <taxon>Pseudomonadati</taxon>
        <taxon>Pseudomonadota</taxon>
        <taxon>Gammaproteobacteria</taxon>
        <taxon>Enterobacterales</taxon>
        <taxon>Enterobacteriaceae</taxon>
        <taxon>Escherichia</taxon>
    </lineage>
</organism>
<dbReference type="EMBL" id="CU928164">
    <property type="protein sequence ID" value="CAR20592.1"/>
    <property type="molecule type" value="Genomic_DNA"/>
</dbReference>
<dbReference type="RefSeq" id="WP_000832548.1">
    <property type="nucleotide sequence ID" value="NC_011750.1"/>
</dbReference>
<dbReference type="RefSeq" id="YP_002410360.1">
    <property type="nucleotide sequence ID" value="NC_011750.1"/>
</dbReference>
<dbReference type="SMR" id="B7NSM7"/>
<dbReference type="STRING" id="585057.ECIAI39_4487"/>
<dbReference type="KEGG" id="ect:ECIAI39_4487"/>
<dbReference type="PATRIC" id="fig|585057.6.peg.4635"/>
<dbReference type="HOGENOM" id="CLU_018808_8_3_6"/>
<dbReference type="Proteomes" id="UP000000749">
    <property type="component" value="Chromosome"/>
</dbReference>
<dbReference type="GO" id="GO:0005886">
    <property type="term" value="C:plasma membrane"/>
    <property type="evidence" value="ECO:0007669"/>
    <property type="project" value="UniProtKB-SubCell"/>
</dbReference>
<dbReference type="GO" id="GO:0015123">
    <property type="term" value="F:acetate transmembrane transporter activity"/>
    <property type="evidence" value="ECO:0007669"/>
    <property type="project" value="UniProtKB-UniRule"/>
</dbReference>
<dbReference type="GO" id="GO:0043879">
    <property type="term" value="F:glycolate transmembrane transporter activity"/>
    <property type="evidence" value="ECO:0007669"/>
    <property type="project" value="InterPro"/>
</dbReference>
<dbReference type="GO" id="GO:0015293">
    <property type="term" value="F:symporter activity"/>
    <property type="evidence" value="ECO:0007669"/>
    <property type="project" value="UniProtKB-KW"/>
</dbReference>
<dbReference type="GO" id="GO:0006847">
    <property type="term" value="P:plasma membrane acetate transport"/>
    <property type="evidence" value="ECO:0007669"/>
    <property type="project" value="TreeGrafter"/>
</dbReference>
<dbReference type="GO" id="GO:0006814">
    <property type="term" value="P:sodium ion transport"/>
    <property type="evidence" value="ECO:0007669"/>
    <property type="project" value="UniProtKB-KW"/>
</dbReference>
<dbReference type="CDD" id="cd11480">
    <property type="entry name" value="SLC5sbd_u4"/>
    <property type="match status" value="1"/>
</dbReference>
<dbReference type="FunFam" id="1.20.1730.10:FF:000001">
    <property type="entry name" value="Cation/acetate symporter ActP"/>
    <property type="match status" value="1"/>
</dbReference>
<dbReference type="Gene3D" id="1.20.1730.10">
    <property type="entry name" value="Sodium/glucose cotransporter"/>
    <property type="match status" value="1"/>
</dbReference>
<dbReference type="HAMAP" id="MF_01426">
    <property type="entry name" value="Acet_symport_ActP"/>
    <property type="match status" value="1"/>
</dbReference>
<dbReference type="InterPro" id="IPR014083">
    <property type="entry name" value="Cation/Ac_symporter_ActP"/>
</dbReference>
<dbReference type="InterPro" id="IPR038377">
    <property type="entry name" value="Na/Glc_symporter_sf"/>
</dbReference>
<dbReference type="InterPro" id="IPR001734">
    <property type="entry name" value="Na/solute_symporter"/>
</dbReference>
<dbReference type="InterPro" id="IPR018212">
    <property type="entry name" value="Na/solute_symporter_CS"/>
</dbReference>
<dbReference type="InterPro" id="IPR050277">
    <property type="entry name" value="Sodium:Solute_Symporter"/>
</dbReference>
<dbReference type="NCBIfam" id="NF006903">
    <property type="entry name" value="PRK09395.1"/>
    <property type="match status" value="1"/>
</dbReference>
<dbReference type="NCBIfam" id="NF009135">
    <property type="entry name" value="PRK12488.1"/>
    <property type="match status" value="1"/>
</dbReference>
<dbReference type="NCBIfam" id="TIGR00813">
    <property type="entry name" value="sss"/>
    <property type="match status" value="1"/>
</dbReference>
<dbReference type="NCBIfam" id="TIGR02711">
    <property type="entry name" value="symport_actP"/>
    <property type="match status" value="1"/>
</dbReference>
<dbReference type="PANTHER" id="PTHR48086:SF6">
    <property type="entry name" value="CATION_ACETATE SYMPORTER ACTP"/>
    <property type="match status" value="1"/>
</dbReference>
<dbReference type="PANTHER" id="PTHR48086">
    <property type="entry name" value="SODIUM/PROLINE SYMPORTER-RELATED"/>
    <property type="match status" value="1"/>
</dbReference>
<dbReference type="Pfam" id="PF00474">
    <property type="entry name" value="SSF"/>
    <property type="match status" value="1"/>
</dbReference>
<dbReference type="PROSITE" id="PS00456">
    <property type="entry name" value="NA_SOLUT_SYMP_1"/>
    <property type="match status" value="1"/>
</dbReference>
<dbReference type="PROSITE" id="PS00457">
    <property type="entry name" value="NA_SOLUT_SYMP_2"/>
    <property type="match status" value="1"/>
</dbReference>
<dbReference type="PROSITE" id="PS50283">
    <property type="entry name" value="NA_SOLUT_SYMP_3"/>
    <property type="match status" value="1"/>
</dbReference>
<sequence>MKRVLTALAATLPFAANAADAISGAVERQPTNWQAIIMFLIFVVFTLGITYWASKRVRSRNDYYTAGGNITGFQNGLAIAGDYMSAASFLGISALVFTSGYDGLIYSLGFLVGWPIILFLIAERLRNLGRYTFADVASYRLKQGPIRILSACGSLVVVALYLIAQMVGAGKLIELLFGLNYHIAVVLVGVLMMMYVLFGGMLATTWVQIIKAVLLLFGASFMAFMVMKHVGFSFNNLFSEAMAVHPKGVDIMKPGGLVKDPISALSLGLGLMFGTAGLPHILMRFFTVSDAREARKSVFYATGFMGYFYILTFIIGFGAIMLVGANPEYKDAAGHLIGGNNMAAVHLANAVGGNLFLGFISAVAFATILAVVAGLTLAGASAVSHDLYANVFKKGATEREELRVSKITVLILGVIAIILGVLFENQNIAFMVGLAFAIAASCNFPIILLSMYWSKLTTRGAMLGGWLGLITAVVLMILGPTIWVQILGHEKAIFPYEYPALFSISVAFLGIWFFSATDNSAEGARERELFRAQFIRSQTGFGVEQGRAH</sequence>
<comment type="function">
    <text evidence="1">Transports acetate.</text>
</comment>
<comment type="subcellular location">
    <subcellularLocation>
        <location evidence="1">Cell inner membrane</location>
        <topology evidence="1">Multi-pass membrane protein</topology>
    </subcellularLocation>
</comment>
<comment type="similarity">
    <text evidence="1">Belongs to the sodium:solute symporter (SSF) (TC 2.A.21) family.</text>
</comment>
<gene>
    <name evidence="1" type="primary">actP</name>
    <name type="ordered locus">ECIAI39_4487</name>
</gene>
<keyword id="KW-0997">Cell inner membrane</keyword>
<keyword id="KW-1003">Cell membrane</keyword>
<keyword id="KW-0406">Ion transport</keyword>
<keyword id="KW-0472">Membrane</keyword>
<keyword id="KW-0915">Sodium</keyword>
<keyword id="KW-0739">Sodium transport</keyword>
<keyword id="KW-0769">Symport</keyword>
<keyword id="KW-0812">Transmembrane</keyword>
<keyword id="KW-1133">Transmembrane helix</keyword>
<keyword id="KW-0813">Transport</keyword>
<reference key="1">
    <citation type="journal article" date="2009" name="PLoS Genet.">
        <title>Organised genome dynamics in the Escherichia coli species results in highly diverse adaptive paths.</title>
        <authorList>
            <person name="Touchon M."/>
            <person name="Hoede C."/>
            <person name="Tenaillon O."/>
            <person name="Barbe V."/>
            <person name="Baeriswyl S."/>
            <person name="Bidet P."/>
            <person name="Bingen E."/>
            <person name="Bonacorsi S."/>
            <person name="Bouchier C."/>
            <person name="Bouvet O."/>
            <person name="Calteau A."/>
            <person name="Chiapello H."/>
            <person name="Clermont O."/>
            <person name="Cruveiller S."/>
            <person name="Danchin A."/>
            <person name="Diard M."/>
            <person name="Dossat C."/>
            <person name="Karoui M.E."/>
            <person name="Frapy E."/>
            <person name="Garry L."/>
            <person name="Ghigo J.M."/>
            <person name="Gilles A.M."/>
            <person name="Johnson J."/>
            <person name="Le Bouguenec C."/>
            <person name="Lescat M."/>
            <person name="Mangenot S."/>
            <person name="Martinez-Jehanne V."/>
            <person name="Matic I."/>
            <person name="Nassif X."/>
            <person name="Oztas S."/>
            <person name="Petit M.A."/>
            <person name="Pichon C."/>
            <person name="Rouy Z."/>
            <person name="Ruf C.S."/>
            <person name="Schneider D."/>
            <person name="Tourret J."/>
            <person name="Vacherie B."/>
            <person name="Vallenet D."/>
            <person name="Medigue C."/>
            <person name="Rocha E.P.C."/>
            <person name="Denamur E."/>
        </authorList>
    </citation>
    <scope>NUCLEOTIDE SEQUENCE [LARGE SCALE GENOMIC DNA]</scope>
    <source>
        <strain>IAI39 / ExPEC</strain>
    </source>
</reference>
<evidence type="ECO:0000255" key="1">
    <source>
        <dbReference type="HAMAP-Rule" id="MF_01426"/>
    </source>
</evidence>
<proteinExistence type="inferred from homology"/>
<accession>B7NSM7</accession>
<protein>
    <recommendedName>
        <fullName evidence="1">Cation/acetate symporter ActP</fullName>
    </recommendedName>
    <alternativeName>
        <fullName evidence="1">Acetate permease</fullName>
    </alternativeName>
    <alternativeName>
        <fullName evidence="1">Acetate transporter ActP</fullName>
    </alternativeName>
</protein>
<feature type="chain" id="PRO_1000145713" description="Cation/acetate symporter ActP">
    <location>
        <begin position="1"/>
        <end position="549"/>
    </location>
</feature>
<feature type="transmembrane region" description="Helical" evidence="1">
    <location>
        <begin position="33"/>
        <end position="53"/>
    </location>
</feature>
<feature type="transmembrane region" description="Helical" evidence="1">
    <location>
        <begin position="77"/>
        <end position="97"/>
    </location>
</feature>
<feature type="transmembrane region" description="Helical" evidence="1">
    <location>
        <begin position="103"/>
        <end position="123"/>
    </location>
</feature>
<feature type="transmembrane region" description="Helical" evidence="1">
    <location>
        <begin position="148"/>
        <end position="168"/>
    </location>
</feature>
<feature type="transmembrane region" description="Helical" evidence="1">
    <location>
        <begin position="183"/>
        <end position="203"/>
    </location>
</feature>
<feature type="transmembrane region" description="Helical" evidence="1">
    <location>
        <begin position="206"/>
        <end position="226"/>
    </location>
</feature>
<feature type="transmembrane region" description="Helical" evidence="1">
    <location>
        <begin position="262"/>
        <end position="282"/>
    </location>
</feature>
<feature type="transmembrane region" description="Helical" evidence="1">
    <location>
        <begin position="303"/>
        <end position="323"/>
    </location>
</feature>
<feature type="transmembrane region" description="Helical" evidence="1">
    <location>
        <begin position="355"/>
        <end position="375"/>
    </location>
</feature>
<feature type="transmembrane region" description="Helical" evidence="1">
    <location>
        <begin position="404"/>
        <end position="424"/>
    </location>
</feature>
<feature type="transmembrane region" description="Helical" evidence="1">
    <location>
        <begin position="428"/>
        <end position="448"/>
    </location>
</feature>
<feature type="transmembrane region" description="Helical" evidence="1">
    <location>
        <begin position="464"/>
        <end position="484"/>
    </location>
</feature>
<feature type="transmembrane region" description="Helical" evidence="1">
    <location>
        <begin position="493"/>
        <end position="513"/>
    </location>
</feature>
<name>ACTP_ECO7I</name>